<keyword id="KW-0963">Cytoplasm</keyword>
<keyword id="KW-1185">Reference proteome</keyword>
<keyword id="KW-0808">Transferase</keyword>
<reference key="1">
    <citation type="journal article" date="2008" name="J. Bacteriol.">
        <title>The pangenome structure of Escherichia coli: comparative genomic analysis of E. coli commensal and pathogenic isolates.</title>
        <authorList>
            <person name="Rasko D.A."/>
            <person name="Rosovitz M.J."/>
            <person name="Myers G.S.A."/>
            <person name="Mongodin E.F."/>
            <person name="Fricke W.F."/>
            <person name="Gajer P."/>
            <person name="Crabtree J."/>
            <person name="Sebaihia M."/>
            <person name="Thomson N.R."/>
            <person name="Chaudhuri R."/>
            <person name="Henderson I.R."/>
            <person name="Sperandio V."/>
            <person name="Ravel J."/>
        </authorList>
    </citation>
    <scope>NUCLEOTIDE SEQUENCE [LARGE SCALE GENOMIC DNA]</scope>
    <source>
        <strain>E24377A / ETEC</strain>
    </source>
</reference>
<gene>
    <name evidence="1" type="primary">caiB</name>
    <name type="ordered locus">EcE24377A_0040</name>
</gene>
<protein>
    <recommendedName>
        <fullName evidence="1">L-carnitine CoA-transferase</fullName>
        <ecNumber evidence="1">2.8.3.21</ecNumber>
    </recommendedName>
    <alternativeName>
        <fullName evidence="1">Crotonobetainyl-CoA:carnitine CoA-transferase</fullName>
    </alternativeName>
</protein>
<proteinExistence type="inferred from homology"/>
<sequence>MDHLPMPKFGPLAGLRVVFSGIEIAGPFAGQMFAEWGAEVIWIENVAWADTIRVQPNYPQLSRRNLHALSLNIFKDEGREAFLKLMETTDIFIEASKGPAFARRGITDEVLWQHNPKLVIAHLSGFGQYGTEEYTNLPAYNTIAQAFSGYLIQNGDVDQPMPAFPYTADYFSGLTATTAALAALHKARETGKGESIDIAMYEVMLRMGQYFMMDYFNGGEMCPRMSKGKDPYYAGCGLYKCADGYIVMELVGITQIEECFKDIGLAHLLSTPEIPEGTQLIHRIECPYGPLVEEKLDAWLAAHTIAEVKERFAELNIACAKVLTVPELESNPQYVARESITQWQTMDGRTCKGPNIMPKFKNNPGQIWRGMPSHGMDTAAILKNIGYSENDIQELVSKGLAKVED</sequence>
<comment type="function">
    <text evidence="1">Catalyzes the reversible transfer of the CoA moiety from gamma-butyrobetainyl-CoA to L-carnitine to generate L-carnitinyl-CoA and gamma-butyrobetaine. Is also able to catalyze the reversible transfer of the CoA moiety from gamma-butyrobetainyl-CoA or L-carnitinyl-CoA to crotonobetaine to generate crotonobetainyl-CoA.</text>
</comment>
<comment type="catalytic activity">
    <reaction evidence="1">
        <text>crotonobetainyl-CoA + (R)-carnitine = crotonobetaine + (R)-carnitinyl-CoA</text>
        <dbReference type="Rhea" id="RHEA:28526"/>
        <dbReference type="ChEBI" id="CHEBI:16347"/>
        <dbReference type="ChEBI" id="CHEBI:17237"/>
        <dbReference type="ChEBI" id="CHEBI:60932"/>
        <dbReference type="ChEBI" id="CHEBI:60933"/>
        <dbReference type="EC" id="2.8.3.21"/>
    </reaction>
</comment>
<comment type="catalytic activity">
    <reaction evidence="1">
        <text>4-(trimethylamino)butanoyl-CoA + (R)-carnitine = (R)-carnitinyl-CoA + 4-(trimethylamino)butanoate</text>
        <dbReference type="Rhea" id="RHEA:28418"/>
        <dbReference type="ChEBI" id="CHEBI:16244"/>
        <dbReference type="ChEBI" id="CHEBI:16347"/>
        <dbReference type="ChEBI" id="CHEBI:60932"/>
        <dbReference type="ChEBI" id="CHEBI:61513"/>
        <dbReference type="EC" id="2.8.3.21"/>
    </reaction>
</comment>
<comment type="pathway">
    <text evidence="1">Amine and polyamine metabolism; carnitine metabolism.</text>
</comment>
<comment type="subunit">
    <text evidence="1">Homodimer.</text>
</comment>
<comment type="subcellular location">
    <subcellularLocation>
        <location evidence="1">Cytoplasm</location>
    </subcellularLocation>
</comment>
<comment type="similarity">
    <text evidence="1">Belongs to the CoA-transferase III family. CaiB subfamily.</text>
</comment>
<organism>
    <name type="scientific">Escherichia coli O139:H28 (strain E24377A / ETEC)</name>
    <dbReference type="NCBI Taxonomy" id="331111"/>
    <lineage>
        <taxon>Bacteria</taxon>
        <taxon>Pseudomonadati</taxon>
        <taxon>Pseudomonadota</taxon>
        <taxon>Gammaproteobacteria</taxon>
        <taxon>Enterobacterales</taxon>
        <taxon>Enterobacteriaceae</taxon>
        <taxon>Escherichia</taxon>
    </lineage>
</organism>
<evidence type="ECO:0000255" key="1">
    <source>
        <dbReference type="HAMAP-Rule" id="MF_01050"/>
    </source>
</evidence>
<accession>A7ZHC9</accession>
<feature type="chain" id="PRO_1000064338" description="L-carnitine CoA-transferase">
    <location>
        <begin position="1"/>
        <end position="405"/>
    </location>
</feature>
<feature type="active site" description="Nucleophile" evidence="1">
    <location>
        <position position="169"/>
    </location>
</feature>
<feature type="binding site" evidence="1">
    <location>
        <position position="97"/>
    </location>
    <ligand>
        <name>CoA</name>
        <dbReference type="ChEBI" id="CHEBI:57287"/>
    </ligand>
</feature>
<feature type="binding site" evidence="1">
    <location>
        <position position="104"/>
    </location>
    <ligand>
        <name>CoA</name>
        <dbReference type="ChEBI" id="CHEBI:57287"/>
    </ligand>
</feature>
<name>CAIB_ECO24</name>
<dbReference type="EC" id="2.8.3.21" evidence="1"/>
<dbReference type="EMBL" id="CP000800">
    <property type="protein sequence ID" value="ABV18658.1"/>
    <property type="molecule type" value="Genomic_DNA"/>
</dbReference>
<dbReference type="RefSeq" id="WP_000349926.1">
    <property type="nucleotide sequence ID" value="NC_009801.1"/>
</dbReference>
<dbReference type="SMR" id="A7ZHC9"/>
<dbReference type="KEGG" id="ecw:EcE24377A_0040"/>
<dbReference type="HOGENOM" id="CLU_033975_2_0_6"/>
<dbReference type="UniPathway" id="UPA00117"/>
<dbReference type="Proteomes" id="UP000001122">
    <property type="component" value="Chromosome"/>
</dbReference>
<dbReference type="GO" id="GO:0005737">
    <property type="term" value="C:cytoplasm"/>
    <property type="evidence" value="ECO:0007669"/>
    <property type="project" value="UniProtKB-SubCell"/>
</dbReference>
<dbReference type="GO" id="GO:0008735">
    <property type="term" value="F:L-carnitine CoA-transferase activity"/>
    <property type="evidence" value="ECO:0007669"/>
    <property type="project" value="RHEA"/>
</dbReference>
<dbReference type="GO" id="GO:0009437">
    <property type="term" value="P:carnitine metabolic process"/>
    <property type="evidence" value="ECO:0007669"/>
    <property type="project" value="UniProtKB-UniRule"/>
</dbReference>
<dbReference type="FunFam" id="3.30.1540.10:FF:000001">
    <property type="entry name" value="L-carnitine CoA-transferase"/>
    <property type="match status" value="1"/>
</dbReference>
<dbReference type="Gene3D" id="3.40.50.10540">
    <property type="entry name" value="Crotonobetainyl-coa:carnitine coa-transferase, domain 1"/>
    <property type="match status" value="1"/>
</dbReference>
<dbReference type="Gene3D" id="3.30.1540.10">
    <property type="entry name" value="formyl-coa transferase, domain 3"/>
    <property type="match status" value="1"/>
</dbReference>
<dbReference type="HAMAP" id="MF_01050">
    <property type="entry name" value="CaiB"/>
    <property type="match status" value="1"/>
</dbReference>
<dbReference type="InterPro" id="IPR050509">
    <property type="entry name" value="CoA-transferase_III"/>
</dbReference>
<dbReference type="InterPro" id="IPR023452">
    <property type="entry name" value="CoA-Trfase_CaiB"/>
</dbReference>
<dbReference type="InterPro" id="IPR003673">
    <property type="entry name" value="CoA-Trfase_fam_III"/>
</dbReference>
<dbReference type="InterPro" id="IPR044855">
    <property type="entry name" value="CoA-Trfase_III_dom3_sf"/>
</dbReference>
<dbReference type="InterPro" id="IPR023606">
    <property type="entry name" value="CoA-Trfase_III_dom_1_sf"/>
</dbReference>
<dbReference type="NCBIfam" id="NF002914">
    <property type="entry name" value="PRK03525.1"/>
    <property type="match status" value="1"/>
</dbReference>
<dbReference type="PANTHER" id="PTHR48228:SF6">
    <property type="entry name" value="L-CARNITINE COA-TRANSFERASE"/>
    <property type="match status" value="1"/>
</dbReference>
<dbReference type="PANTHER" id="PTHR48228">
    <property type="entry name" value="SUCCINYL-COA--D-CITRAMALATE COA-TRANSFERASE"/>
    <property type="match status" value="1"/>
</dbReference>
<dbReference type="Pfam" id="PF02515">
    <property type="entry name" value="CoA_transf_3"/>
    <property type="match status" value="1"/>
</dbReference>
<dbReference type="SUPFAM" id="SSF89796">
    <property type="entry name" value="CoA-transferase family III (CaiB/BaiF)"/>
    <property type="match status" value="1"/>
</dbReference>